<feature type="chain" id="PRO_0000060055" description="Putative phosphite transport system permease protein HtxE">
    <location>
        <begin position="1"/>
        <end position="261"/>
    </location>
</feature>
<feature type="transmembrane region" description="Helical" evidence="2">
    <location>
        <begin position="122"/>
        <end position="142"/>
    </location>
</feature>
<feature type="transmembrane region" description="Helical" evidence="2">
    <location>
        <begin position="203"/>
        <end position="220"/>
    </location>
</feature>
<feature type="transmembrane region" description="Helical" evidence="2">
    <location>
        <begin position="229"/>
        <end position="249"/>
    </location>
</feature>
<feature type="domain" description="ABC transmembrane type-1" evidence="2">
    <location>
        <begin position="47"/>
        <end position="253"/>
    </location>
</feature>
<sequence length="261" mass="29399">MWPPAIAETEEVGRIQDLDRQKLPLFSHIETQERVEQKMNLDTLKMEATTETVEVLVKPVGYVWTVFIKMIETWRLRCGARSCRCWCRFPWRISRPATTSPNRFTYTAARGTISLLRSAPELIVALFLVLAYGFGPIAGVLALGLHAAGFLGKFYAEDIENADKKPQEALEAIGAGKLKTLWYGVIPQVLPQYIAYTAYILDRNLRMATVIGLVGAGGIGQELKGRFDMFQYGHVMTILIAIFVFVFVLDQLQARIRAKLI</sequence>
<proteinExistence type="inferred from homology"/>
<evidence type="ECO:0000250" key="1"/>
<evidence type="ECO:0000255" key="2">
    <source>
        <dbReference type="PROSITE-ProRule" id="PRU00441"/>
    </source>
</evidence>
<evidence type="ECO:0000305" key="3"/>
<organism>
    <name type="scientific">Stutzerimonas stutzeri</name>
    <name type="common">Pseudomonas stutzeri</name>
    <dbReference type="NCBI Taxonomy" id="316"/>
    <lineage>
        <taxon>Bacteria</taxon>
        <taxon>Pseudomonadati</taxon>
        <taxon>Pseudomonadota</taxon>
        <taxon>Gammaproteobacteria</taxon>
        <taxon>Pseudomonadales</taxon>
        <taxon>Pseudomonadaceae</taxon>
        <taxon>Stutzerimonas</taxon>
    </lineage>
</organism>
<comment type="function">
    <text>Probably forms part of a binding-protein-dependent hypophosphite transporter.</text>
</comment>
<comment type="subcellular location">
    <subcellularLocation>
        <location evidence="1">Cell inner membrane</location>
        <topology evidence="2">Multi-pass membrane protein</topology>
    </subcellularLocation>
</comment>
<comment type="similarity">
    <text evidence="3">Belongs to the binding-protein-dependent transport system permease family.</text>
</comment>
<gene>
    <name type="primary">htxE</name>
</gene>
<name>HTXE_STUST</name>
<dbReference type="EMBL" id="AF061267">
    <property type="protein sequence ID" value="AAC71715.1"/>
    <property type="molecule type" value="Genomic_DNA"/>
</dbReference>
<dbReference type="SMR" id="O69064"/>
<dbReference type="TCDB" id="3.A.1.9.4">
    <property type="family name" value="the atp-binding cassette (abc) superfamily"/>
</dbReference>
<dbReference type="GO" id="GO:0005886">
    <property type="term" value="C:plasma membrane"/>
    <property type="evidence" value="ECO:0007669"/>
    <property type="project" value="UniProtKB-SubCell"/>
</dbReference>
<dbReference type="GO" id="GO:0055085">
    <property type="term" value="P:transmembrane transport"/>
    <property type="evidence" value="ECO:0007669"/>
    <property type="project" value="InterPro"/>
</dbReference>
<dbReference type="CDD" id="cd06261">
    <property type="entry name" value="TM_PBP2"/>
    <property type="match status" value="1"/>
</dbReference>
<dbReference type="Gene3D" id="1.10.3720.10">
    <property type="entry name" value="MetI-like"/>
    <property type="match status" value="1"/>
</dbReference>
<dbReference type="InterPro" id="IPR000515">
    <property type="entry name" value="MetI-like"/>
</dbReference>
<dbReference type="InterPro" id="IPR035906">
    <property type="entry name" value="MetI-like_sf"/>
</dbReference>
<dbReference type="PANTHER" id="PTHR30043:SF1">
    <property type="entry name" value="ABC TRANSPORT SYSTEM PERMEASE PROTEIN P69"/>
    <property type="match status" value="1"/>
</dbReference>
<dbReference type="PANTHER" id="PTHR30043">
    <property type="entry name" value="PHOSPHONATES TRANSPORT SYSTEM PERMEASE PROTEIN"/>
    <property type="match status" value="1"/>
</dbReference>
<dbReference type="Pfam" id="PF00528">
    <property type="entry name" value="BPD_transp_1"/>
    <property type="match status" value="1"/>
</dbReference>
<dbReference type="SUPFAM" id="SSF161098">
    <property type="entry name" value="MetI-like"/>
    <property type="match status" value="1"/>
</dbReference>
<dbReference type="PROSITE" id="PS50928">
    <property type="entry name" value="ABC_TM1"/>
    <property type="match status" value="1"/>
</dbReference>
<keyword id="KW-0997">Cell inner membrane</keyword>
<keyword id="KW-1003">Cell membrane</keyword>
<keyword id="KW-0472">Membrane</keyword>
<keyword id="KW-0812">Transmembrane</keyword>
<keyword id="KW-1133">Transmembrane helix</keyword>
<keyword id="KW-0813">Transport</keyword>
<reference key="1">
    <citation type="journal article" date="1998" name="J. Bacteriol.">
        <title>Molecular genetic analysis of phosphite and hypophosphite oxidation by Pseudomonas stutzeri WM88.</title>
        <authorList>
            <person name="Metcalf W.W."/>
            <person name="Wolfe R.S."/>
        </authorList>
    </citation>
    <scope>NUCLEOTIDE SEQUENCE [GENOMIC DNA]</scope>
    <source>
        <strain>WM88</strain>
    </source>
</reference>
<protein>
    <recommendedName>
        <fullName>Putative phosphite transport system permease protein HtxE</fullName>
    </recommendedName>
</protein>
<accession>O69064</accession>